<keyword id="KW-0067">ATP-binding</keyword>
<keyword id="KW-0436">Ligase</keyword>
<keyword id="KW-0547">Nucleotide-binding</keyword>
<keyword id="KW-0648">Protein biosynthesis</keyword>
<keyword id="KW-1185">Reference proteome</keyword>
<name>GATA_LAWIP</name>
<protein>
    <recommendedName>
        <fullName evidence="1">Glutamyl-tRNA(Gln) amidotransferase subunit A</fullName>
        <shortName evidence="1">Glu-ADT subunit A</shortName>
        <ecNumber evidence="1">6.3.5.7</ecNumber>
    </recommendedName>
</protein>
<dbReference type="EC" id="6.3.5.7" evidence="1"/>
<dbReference type="EMBL" id="AM180252">
    <property type="protein sequence ID" value="CAJ54939.1"/>
    <property type="molecule type" value="Genomic_DNA"/>
</dbReference>
<dbReference type="RefSeq" id="WP_011526968.1">
    <property type="nucleotide sequence ID" value="NC_008011.1"/>
</dbReference>
<dbReference type="SMR" id="Q1MPY8"/>
<dbReference type="STRING" id="363253.LI0885"/>
<dbReference type="KEGG" id="lip:LI0885"/>
<dbReference type="eggNOG" id="COG0154">
    <property type="taxonomic scope" value="Bacteria"/>
</dbReference>
<dbReference type="HOGENOM" id="CLU_009600_0_3_7"/>
<dbReference type="OrthoDB" id="9811471at2"/>
<dbReference type="Proteomes" id="UP000002430">
    <property type="component" value="Chromosome"/>
</dbReference>
<dbReference type="GO" id="GO:0030956">
    <property type="term" value="C:glutamyl-tRNA(Gln) amidotransferase complex"/>
    <property type="evidence" value="ECO:0007669"/>
    <property type="project" value="InterPro"/>
</dbReference>
<dbReference type="GO" id="GO:0005524">
    <property type="term" value="F:ATP binding"/>
    <property type="evidence" value="ECO:0007669"/>
    <property type="project" value="UniProtKB-KW"/>
</dbReference>
<dbReference type="GO" id="GO:0050567">
    <property type="term" value="F:glutaminyl-tRNA synthase (glutamine-hydrolyzing) activity"/>
    <property type="evidence" value="ECO:0007669"/>
    <property type="project" value="UniProtKB-UniRule"/>
</dbReference>
<dbReference type="GO" id="GO:0006412">
    <property type="term" value="P:translation"/>
    <property type="evidence" value="ECO:0007669"/>
    <property type="project" value="UniProtKB-UniRule"/>
</dbReference>
<dbReference type="Gene3D" id="3.90.1300.10">
    <property type="entry name" value="Amidase signature (AS) domain"/>
    <property type="match status" value="1"/>
</dbReference>
<dbReference type="HAMAP" id="MF_00120">
    <property type="entry name" value="GatA"/>
    <property type="match status" value="1"/>
</dbReference>
<dbReference type="InterPro" id="IPR000120">
    <property type="entry name" value="Amidase"/>
</dbReference>
<dbReference type="InterPro" id="IPR020556">
    <property type="entry name" value="Amidase_CS"/>
</dbReference>
<dbReference type="InterPro" id="IPR023631">
    <property type="entry name" value="Amidase_dom"/>
</dbReference>
<dbReference type="InterPro" id="IPR036928">
    <property type="entry name" value="AS_sf"/>
</dbReference>
<dbReference type="InterPro" id="IPR004412">
    <property type="entry name" value="GatA"/>
</dbReference>
<dbReference type="NCBIfam" id="TIGR00132">
    <property type="entry name" value="gatA"/>
    <property type="match status" value="1"/>
</dbReference>
<dbReference type="PANTHER" id="PTHR11895:SF7">
    <property type="entry name" value="GLUTAMYL-TRNA(GLN) AMIDOTRANSFERASE SUBUNIT A, MITOCHONDRIAL"/>
    <property type="match status" value="1"/>
</dbReference>
<dbReference type="PANTHER" id="PTHR11895">
    <property type="entry name" value="TRANSAMIDASE"/>
    <property type="match status" value="1"/>
</dbReference>
<dbReference type="Pfam" id="PF01425">
    <property type="entry name" value="Amidase"/>
    <property type="match status" value="1"/>
</dbReference>
<dbReference type="SUPFAM" id="SSF75304">
    <property type="entry name" value="Amidase signature (AS) enzymes"/>
    <property type="match status" value="1"/>
</dbReference>
<dbReference type="PROSITE" id="PS00571">
    <property type="entry name" value="AMIDASES"/>
    <property type="match status" value="1"/>
</dbReference>
<feature type="chain" id="PRO_1000015851" description="Glutamyl-tRNA(Gln) amidotransferase subunit A">
    <location>
        <begin position="1"/>
        <end position="485"/>
    </location>
</feature>
<feature type="active site" description="Charge relay system" evidence="1">
    <location>
        <position position="78"/>
    </location>
</feature>
<feature type="active site" description="Charge relay system" evidence="1">
    <location>
        <position position="153"/>
    </location>
</feature>
<feature type="active site" description="Acyl-ester intermediate" evidence="1">
    <location>
        <position position="177"/>
    </location>
</feature>
<gene>
    <name evidence="1" type="primary">gatA</name>
    <name type="ordered locus">LI0885</name>
</gene>
<sequence length="485" mass="52760">MTSDIHLSLAQIHNLLISREKSVEEVTQACLDRIIATEPTINAFITICAEEALSEAKKLDQSTPDPKKPLWGIPIAVKDNILTKNIPTTAASCMLKHFIPQYDAFIIQQLKNAGAIIIGKTNLDEFAMGSSTETSFFGPTYNPWNTKCVPGGSSGGSAASVAAFQCFSAIGTDTGGSIRQPAALCGCIGLKPTYGRVSRYGIIAYASSLDQAGPITRTVEDAAIMLSVLAKHDPQDTTSSFKATDNYYINLKKQDLTGITIGIPKEFISEHIDPPILDIYQQAIEQAKELGAKTIDLSLPHATDHAIATYYIIATAEASSNLARFDGVRYGYRAKNSHTLEELYINSRTKGFGEEVKRRILLGTHVLSTDYYENYYHKAAQVRYLILQDFLSVFKKCDILLTPVSPITAWEIGSTIKKPITIYHKDIFTVSLNLAGLPGLSIPAGLVKGLPVGIQLIGQAFDESTLLSIGNILHKYLGPTSQPNL</sequence>
<proteinExistence type="inferred from homology"/>
<organism>
    <name type="scientific">Lawsonia intracellularis (strain PHE/MN1-00)</name>
    <dbReference type="NCBI Taxonomy" id="363253"/>
    <lineage>
        <taxon>Bacteria</taxon>
        <taxon>Pseudomonadati</taxon>
        <taxon>Thermodesulfobacteriota</taxon>
        <taxon>Desulfovibrionia</taxon>
        <taxon>Desulfovibrionales</taxon>
        <taxon>Desulfovibrionaceae</taxon>
        <taxon>Lawsonia</taxon>
    </lineage>
</organism>
<reference key="1">
    <citation type="submission" date="2005-11" db="EMBL/GenBank/DDBJ databases">
        <title>The complete genome sequence of Lawsonia intracellularis: the causative agent of proliferative enteropathy.</title>
        <authorList>
            <person name="Kaur K."/>
            <person name="Zhang Q."/>
            <person name="Beckler D."/>
            <person name="Munir S."/>
            <person name="Li L."/>
            <person name="Kinsley K."/>
            <person name="Herron L."/>
            <person name="Peterson A."/>
            <person name="May B."/>
            <person name="Singh S."/>
            <person name="Gebhart C."/>
            <person name="Kapur V."/>
        </authorList>
    </citation>
    <scope>NUCLEOTIDE SEQUENCE [LARGE SCALE GENOMIC DNA]</scope>
    <source>
        <strain>PHE/MN1-00</strain>
    </source>
</reference>
<comment type="function">
    <text evidence="1">Allows the formation of correctly charged Gln-tRNA(Gln) through the transamidation of misacylated Glu-tRNA(Gln) in organisms which lack glutaminyl-tRNA synthetase. The reaction takes place in the presence of glutamine and ATP through an activated gamma-phospho-Glu-tRNA(Gln).</text>
</comment>
<comment type="catalytic activity">
    <reaction evidence="1">
        <text>L-glutamyl-tRNA(Gln) + L-glutamine + ATP + H2O = L-glutaminyl-tRNA(Gln) + L-glutamate + ADP + phosphate + H(+)</text>
        <dbReference type="Rhea" id="RHEA:17521"/>
        <dbReference type="Rhea" id="RHEA-COMP:9681"/>
        <dbReference type="Rhea" id="RHEA-COMP:9684"/>
        <dbReference type="ChEBI" id="CHEBI:15377"/>
        <dbReference type="ChEBI" id="CHEBI:15378"/>
        <dbReference type="ChEBI" id="CHEBI:29985"/>
        <dbReference type="ChEBI" id="CHEBI:30616"/>
        <dbReference type="ChEBI" id="CHEBI:43474"/>
        <dbReference type="ChEBI" id="CHEBI:58359"/>
        <dbReference type="ChEBI" id="CHEBI:78520"/>
        <dbReference type="ChEBI" id="CHEBI:78521"/>
        <dbReference type="ChEBI" id="CHEBI:456216"/>
        <dbReference type="EC" id="6.3.5.7"/>
    </reaction>
</comment>
<comment type="subunit">
    <text evidence="1">Heterotrimer of A, B and C subunits.</text>
</comment>
<comment type="similarity">
    <text evidence="1">Belongs to the amidase family. GatA subfamily.</text>
</comment>
<accession>Q1MPY8</accession>
<evidence type="ECO:0000255" key="1">
    <source>
        <dbReference type="HAMAP-Rule" id="MF_00120"/>
    </source>
</evidence>